<reference key="1">
    <citation type="journal article" date="1996" name="Microbiology">
        <title>Systematic sequencing of the 283 kb 210 degrees-232 degrees region of the Bacillus subtilis genome containing the skin element and many sporulation genes.</title>
        <authorList>
            <person name="Mizuno M."/>
            <person name="Masuda S."/>
            <person name="Takemaru K."/>
            <person name="Hosono S."/>
            <person name="Sato T."/>
            <person name="Takeuchi M."/>
            <person name="Kobayashi Y."/>
        </authorList>
    </citation>
    <scope>NUCLEOTIDE SEQUENCE [GENOMIC DNA]</scope>
    <source>
        <strain>168 / JH642</strain>
    </source>
</reference>
<reference key="2">
    <citation type="journal article" date="1997" name="Nature">
        <title>The complete genome sequence of the Gram-positive bacterium Bacillus subtilis.</title>
        <authorList>
            <person name="Kunst F."/>
            <person name="Ogasawara N."/>
            <person name="Moszer I."/>
            <person name="Albertini A.M."/>
            <person name="Alloni G."/>
            <person name="Azevedo V."/>
            <person name="Bertero M.G."/>
            <person name="Bessieres P."/>
            <person name="Bolotin A."/>
            <person name="Borchert S."/>
            <person name="Borriss R."/>
            <person name="Boursier L."/>
            <person name="Brans A."/>
            <person name="Braun M."/>
            <person name="Brignell S.C."/>
            <person name="Bron S."/>
            <person name="Brouillet S."/>
            <person name="Bruschi C.V."/>
            <person name="Caldwell B."/>
            <person name="Capuano V."/>
            <person name="Carter N.M."/>
            <person name="Choi S.-K."/>
            <person name="Codani J.-J."/>
            <person name="Connerton I.F."/>
            <person name="Cummings N.J."/>
            <person name="Daniel R.A."/>
            <person name="Denizot F."/>
            <person name="Devine K.M."/>
            <person name="Duesterhoeft A."/>
            <person name="Ehrlich S.D."/>
            <person name="Emmerson P.T."/>
            <person name="Entian K.-D."/>
            <person name="Errington J."/>
            <person name="Fabret C."/>
            <person name="Ferrari E."/>
            <person name="Foulger D."/>
            <person name="Fritz C."/>
            <person name="Fujita M."/>
            <person name="Fujita Y."/>
            <person name="Fuma S."/>
            <person name="Galizzi A."/>
            <person name="Galleron N."/>
            <person name="Ghim S.-Y."/>
            <person name="Glaser P."/>
            <person name="Goffeau A."/>
            <person name="Golightly E.J."/>
            <person name="Grandi G."/>
            <person name="Guiseppi G."/>
            <person name="Guy B.J."/>
            <person name="Haga K."/>
            <person name="Haiech J."/>
            <person name="Harwood C.R."/>
            <person name="Henaut A."/>
            <person name="Hilbert H."/>
            <person name="Holsappel S."/>
            <person name="Hosono S."/>
            <person name="Hullo M.-F."/>
            <person name="Itaya M."/>
            <person name="Jones L.-M."/>
            <person name="Joris B."/>
            <person name="Karamata D."/>
            <person name="Kasahara Y."/>
            <person name="Klaerr-Blanchard M."/>
            <person name="Klein C."/>
            <person name="Kobayashi Y."/>
            <person name="Koetter P."/>
            <person name="Koningstein G."/>
            <person name="Krogh S."/>
            <person name="Kumano M."/>
            <person name="Kurita K."/>
            <person name="Lapidus A."/>
            <person name="Lardinois S."/>
            <person name="Lauber J."/>
            <person name="Lazarevic V."/>
            <person name="Lee S.-M."/>
            <person name="Levine A."/>
            <person name="Liu H."/>
            <person name="Masuda S."/>
            <person name="Mauel C."/>
            <person name="Medigue C."/>
            <person name="Medina N."/>
            <person name="Mellado R.P."/>
            <person name="Mizuno M."/>
            <person name="Moestl D."/>
            <person name="Nakai S."/>
            <person name="Noback M."/>
            <person name="Noone D."/>
            <person name="O'Reilly M."/>
            <person name="Ogawa K."/>
            <person name="Ogiwara A."/>
            <person name="Oudega B."/>
            <person name="Park S.-H."/>
            <person name="Parro V."/>
            <person name="Pohl T.M."/>
            <person name="Portetelle D."/>
            <person name="Porwollik S."/>
            <person name="Prescott A.M."/>
            <person name="Presecan E."/>
            <person name="Pujic P."/>
            <person name="Purnelle B."/>
            <person name="Rapoport G."/>
            <person name="Rey M."/>
            <person name="Reynolds S."/>
            <person name="Rieger M."/>
            <person name="Rivolta C."/>
            <person name="Rocha E."/>
            <person name="Roche B."/>
            <person name="Rose M."/>
            <person name="Sadaie Y."/>
            <person name="Sato T."/>
            <person name="Scanlan E."/>
            <person name="Schleich S."/>
            <person name="Schroeter R."/>
            <person name="Scoffone F."/>
            <person name="Sekiguchi J."/>
            <person name="Sekowska A."/>
            <person name="Seror S.J."/>
            <person name="Serror P."/>
            <person name="Shin B.-S."/>
            <person name="Soldo B."/>
            <person name="Sorokin A."/>
            <person name="Tacconi E."/>
            <person name="Takagi T."/>
            <person name="Takahashi H."/>
            <person name="Takemaru K."/>
            <person name="Takeuchi M."/>
            <person name="Tamakoshi A."/>
            <person name="Tanaka T."/>
            <person name="Terpstra P."/>
            <person name="Tognoni A."/>
            <person name="Tosato V."/>
            <person name="Uchiyama S."/>
            <person name="Vandenbol M."/>
            <person name="Vannier F."/>
            <person name="Vassarotti A."/>
            <person name="Viari A."/>
            <person name="Wambutt R."/>
            <person name="Wedler E."/>
            <person name="Wedler H."/>
            <person name="Weitzenegger T."/>
            <person name="Winters P."/>
            <person name="Wipat A."/>
            <person name="Yamamoto H."/>
            <person name="Yamane K."/>
            <person name="Yasumoto K."/>
            <person name="Yata K."/>
            <person name="Yoshida K."/>
            <person name="Yoshikawa H.-F."/>
            <person name="Zumstein E."/>
            <person name="Yoshikawa H."/>
            <person name="Danchin A."/>
        </authorList>
    </citation>
    <scope>NUCLEOTIDE SEQUENCE [LARGE SCALE GENOMIC DNA]</scope>
    <source>
        <strain>168</strain>
    </source>
</reference>
<reference key="3">
    <citation type="journal article" date="2009" name="Microbiology">
        <title>From a consortium sequence to a unified sequence: the Bacillus subtilis 168 reference genome a decade later.</title>
        <authorList>
            <person name="Barbe V."/>
            <person name="Cruveiller S."/>
            <person name="Kunst F."/>
            <person name="Lenoble P."/>
            <person name="Meurice G."/>
            <person name="Sekowska A."/>
            <person name="Vallenet D."/>
            <person name="Wang T."/>
            <person name="Moszer I."/>
            <person name="Medigue C."/>
            <person name="Danchin A."/>
        </authorList>
    </citation>
    <scope>SEQUENCE REVISION TO 257</scope>
</reference>
<reference key="4">
    <citation type="submission" date="1995-07" db="EMBL/GenBank/DDBJ databases">
        <title>Nucleotide sequence upstream of the cdd locus in Bacillus subtilis.</title>
        <authorList>
            <person name="Kim K."/>
            <person name="Hwang S."/>
            <person name="Suh J."/>
            <person name="Song B.-H."/>
            <person name="Hong S."/>
            <person name="Kim J."/>
        </authorList>
    </citation>
    <scope>NUCLEOTIDE SEQUENCE [GENOMIC DNA] OF 261-319</scope>
    <source>
        <strain>ED40</strain>
    </source>
</reference>
<proteinExistence type="inferred from homology"/>
<accession>P46343</accession>
<gene>
    <name type="primary">phoH</name>
    <name type="synonym">yqfE</name>
    <name type="ordered locus">BSU25340</name>
</gene>
<evidence type="ECO:0000255" key="1"/>
<evidence type="ECO:0000305" key="2"/>
<sequence length="319" mass="35541">MTEHLLAMNQKLKNPDEALSLFGNQDSFLKLMEKDLNLNIITRGETIYVSGDDESFQIADRLLGSLLALIRKGIEISERDVIYAIKMAKKNELEYFESMYEEEITKNAKGKSIRVKTMGQREYVAAMKRNDLVFGIGPAGTGKTYLAVVKAVHALKNGHIKKIILTRPAVEAGESLGFLPGDLKEKVDPYLRPLYDALHDVLGADHTERLMERGIIEIAPLAYMRGRTLDDAYVILDEAQNTTPAQMKMFLTRLGFGSKMIITGDVSQIDLPKGVKSGLAVAKEMLKGIDGISMIELDQTDVVRHPLVAKIIEAYDKQN</sequence>
<name>PHOL_BACSU</name>
<keyword id="KW-0067">ATP-binding</keyword>
<keyword id="KW-0963">Cytoplasm</keyword>
<keyword id="KW-0547">Nucleotide-binding</keyword>
<keyword id="KW-1185">Reference proteome</keyword>
<comment type="subcellular location">
    <subcellularLocation>
        <location evidence="2">Cytoplasm</location>
    </subcellularLocation>
</comment>
<comment type="similarity">
    <text evidence="2">Belongs to the PhoH family.</text>
</comment>
<feature type="chain" id="PRO_0000201156" description="PhoH-like protein">
    <location>
        <begin position="1"/>
        <end position="319"/>
    </location>
</feature>
<feature type="binding site" evidence="1">
    <location>
        <begin position="137"/>
        <end position="144"/>
    </location>
    <ligand>
        <name>ATP</name>
        <dbReference type="ChEBI" id="CHEBI:30616"/>
    </ligand>
</feature>
<feature type="sequence conflict" description="In Ref. 1; BAA12477." evidence="2" ref="1">
    <original>G</original>
    <variation>S</variation>
    <location>
        <position position="257"/>
    </location>
</feature>
<feature type="sequence conflict" description="In Ref. 3; AAA70039." evidence="2" ref="3">
    <original>G</original>
    <variation>R</variation>
    <location>
        <position position="274"/>
    </location>
</feature>
<dbReference type="EMBL" id="D84432">
    <property type="protein sequence ID" value="BAA12477.1"/>
    <property type="molecule type" value="Genomic_DNA"/>
</dbReference>
<dbReference type="EMBL" id="AL009126">
    <property type="protein sequence ID" value="CAB14476.2"/>
    <property type="molecule type" value="Genomic_DNA"/>
</dbReference>
<dbReference type="EMBL" id="U29177">
    <property type="protein sequence ID" value="AAA70039.1"/>
    <property type="molecule type" value="Genomic_DNA"/>
</dbReference>
<dbReference type="PIR" id="E69676">
    <property type="entry name" value="E69676"/>
</dbReference>
<dbReference type="RefSeq" id="NP_390412.2">
    <property type="nucleotide sequence ID" value="NC_000964.3"/>
</dbReference>
<dbReference type="RefSeq" id="WP_003230035.1">
    <property type="nucleotide sequence ID" value="NZ_OZ025638.1"/>
</dbReference>
<dbReference type="SMR" id="P46343"/>
<dbReference type="FunCoup" id="P46343">
    <property type="interactions" value="383"/>
</dbReference>
<dbReference type="IntAct" id="P46343">
    <property type="interactions" value="1"/>
</dbReference>
<dbReference type="STRING" id="224308.BSU25340"/>
<dbReference type="jPOST" id="P46343"/>
<dbReference type="PaxDb" id="224308-BSU25340"/>
<dbReference type="EnsemblBacteria" id="CAB14476">
    <property type="protein sequence ID" value="CAB14476"/>
    <property type="gene ID" value="BSU_25340"/>
</dbReference>
<dbReference type="GeneID" id="937868"/>
<dbReference type="KEGG" id="bsu:BSU25340"/>
<dbReference type="PATRIC" id="fig|224308.179.peg.2755"/>
<dbReference type="eggNOG" id="COG1702">
    <property type="taxonomic scope" value="Bacteria"/>
</dbReference>
<dbReference type="InParanoid" id="P46343"/>
<dbReference type="OrthoDB" id="9773137at2"/>
<dbReference type="PhylomeDB" id="P46343"/>
<dbReference type="BioCyc" id="BSUB:BSU25340-MONOMER"/>
<dbReference type="Proteomes" id="UP000001570">
    <property type="component" value="Chromosome"/>
</dbReference>
<dbReference type="GO" id="GO:0005829">
    <property type="term" value="C:cytosol"/>
    <property type="evidence" value="ECO:0000318"/>
    <property type="project" value="GO_Central"/>
</dbReference>
<dbReference type="GO" id="GO:0005524">
    <property type="term" value="F:ATP binding"/>
    <property type="evidence" value="ECO:0000318"/>
    <property type="project" value="GO_Central"/>
</dbReference>
<dbReference type="FunFam" id="3.40.50.300:FF:000013">
    <property type="entry name" value="PhoH family ATPase"/>
    <property type="match status" value="1"/>
</dbReference>
<dbReference type="Gene3D" id="3.40.50.300">
    <property type="entry name" value="P-loop containing nucleotide triphosphate hydrolases"/>
    <property type="match status" value="1"/>
</dbReference>
<dbReference type="InterPro" id="IPR027417">
    <property type="entry name" value="P-loop_NTPase"/>
</dbReference>
<dbReference type="InterPro" id="IPR003714">
    <property type="entry name" value="PhoH"/>
</dbReference>
<dbReference type="InterPro" id="IPR051451">
    <property type="entry name" value="PhoH2-like"/>
</dbReference>
<dbReference type="PANTHER" id="PTHR30473:SF1">
    <property type="entry name" value="PHOH-LIKE PROTEIN"/>
    <property type="match status" value="1"/>
</dbReference>
<dbReference type="PANTHER" id="PTHR30473">
    <property type="entry name" value="PROTEIN PHOH"/>
    <property type="match status" value="1"/>
</dbReference>
<dbReference type="Pfam" id="PF02562">
    <property type="entry name" value="PhoH"/>
    <property type="match status" value="1"/>
</dbReference>
<dbReference type="SUPFAM" id="SSF52540">
    <property type="entry name" value="P-loop containing nucleoside triphosphate hydrolases"/>
    <property type="match status" value="1"/>
</dbReference>
<organism>
    <name type="scientific">Bacillus subtilis (strain 168)</name>
    <dbReference type="NCBI Taxonomy" id="224308"/>
    <lineage>
        <taxon>Bacteria</taxon>
        <taxon>Bacillati</taxon>
        <taxon>Bacillota</taxon>
        <taxon>Bacilli</taxon>
        <taxon>Bacillales</taxon>
        <taxon>Bacillaceae</taxon>
        <taxon>Bacillus</taxon>
    </lineage>
</organism>
<protein>
    <recommendedName>
        <fullName>PhoH-like protein</fullName>
    </recommendedName>
</protein>